<name>ATPA_SALA4</name>
<evidence type="ECO:0000255" key="1">
    <source>
        <dbReference type="HAMAP-Rule" id="MF_01346"/>
    </source>
</evidence>
<comment type="function">
    <text evidence="1">Produces ATP from ADP in the presence of a proton gradient across the membrane. The alpha chain is a regulatory subunit.</text>
</comment>
<comment type="catalytic activity">
    <reaction evidence="1">
        <text>ATP + H2O + 4 H(+)(in) = ADP + phosphate + 5 H(+)(out)</text>
        <dbReference type="Rhea" id="RHEA:57720"/>
        <dbReference type="ChEBI" id="CHEBI:15377"/>
        <dbReference type="ChEBI" id="CHEBI:15378"/>
        <dbReference type="ChEBI" id="CHEBI:30616"/>
        <dbReference type="ChEBI" id="CHEBI:43474"/>
        <dbReference type="ChEBI" id="CHEBI:456216"/>
        <dbReference type="EC" id="7.1.2.2"/>
    </reaction>
</comment>
<comment type="subunit">
    <text evidence="1">F-type ATPases have 2 components, CF(1) - the catalytic core - and CF(0) - the membrane proton channel. CF(1) has five subunits: alpha(3), beta(3), gamma(1), delta(1), epsilon(1). CF(0) has three main subunits: a(1), b(2) and c(9-12). The alpha and beta chains form an alternating ring which encloses part of the gamma chain. CF(1) is attached to CF(0) by a central stalk formed by the gamma and epsilon chains, while a peripheral stalk is formed by the delta and b chains.</text>
</comment>
<comment type="subcellular location">
    <subcellularLocation>
        <location evidence="1">Cell inner membrane</location>
        <topology evidence="1">Peripheral membrane protein</topology>
    </subcellularLocation>
</comment>
<comment type="similarity">
    <text evidence="1">Belongs to the ATPase alpha/beta chains family.</text>
</comment>
<accession>B5EYZ8</accession>
<dbReference type="EC" id="7.1.2.2" evidence="1"/>
<dbReference type="EMBL" id="CP001138">
    <property type="protein sequence ID" value="ACH51248.1"/>
    <property type="molecule type" value="Genomic_DNA"/>
</dbReference>
<dbReference type="RefSeq" id="WP_001176751.1">
    <property type="nucleotide sequence ID" value="NC_011149.1"/>
</dbReference>
<dbReference type="SMR" id="B5EYZ8"/>
<dbReference type="GeneID" id="66758156"/>
<dbReference type="KEGG" id="sea:SeAg_B4092"/>
<dbReference type="HOGENOM" id="CLU_010091_2_1_6"/>
<dbReference type="Proteomes" id="UP000008819">
    <property type="component" value="Chromosome"/>
</dbReference>
<dbReference type="GO" id="GO:0005886">
    <property type="term" value="C:plasma membrane"/>
    <property type="evidence" value="ECO:0007669"/>
    <property type="project" value="UniProtKB-SubCell"/>
</dbReference>
<dbReference type="GO" id="GO:0045259">
    <property type="term" value="C:proton-transporting ATP synthase complex"/>
    <property type="evidence" value="ECO:0007669"/>
    <property type="project" value="UniProtKB-KW"/>
</dbReference>
<dbReference type="GO" id="GO:0043531">
    <property type="term" value="F:ADP binding"/>
    <property type="evidence" value="ECO:0007669"/>
    <property type="project" value="TreeGrafter"/>
</dbReference>
<dbReference type="GO" id="GO:0005524">
    <property type="term" value="F:ATP binding"/>
    <property type="evidence" value="ECO:0007669"/>
    <property type="project" value="UniProtKB-UniRule"/>
</dbReference>
<dbReference type="GO" id="GO:0046933">
    <property type="term" value="F:proton-transporting ATP synthase activity, rotational mechanism"/>
    <property type="evidence" value="ECO:0007669"/>
    <property type="project" value="UniProtKB-UniRule"/>
</dbReference>
<dbReference type="CDD" id="cd18113">
    <property type="entry name" value="ATP-synt_F1_alpha_C"/>
    <property type="match status" value="1"/>
</dbReference>
<dbReference type="CDD" id="cd18116">
    <property type="entry name" value="ATP-synt_F1_alpha_N"/>
    <property type="match status" value="1"/>
</dbReference>
<dbReference type="CDD" id="cd01132">
    <property type="entry name" value="F1-ATPase_alpha_CD"/>
    <property type="match status" value="1"/>
</dbReference>
<dbReference type="FunFam" id="1.20.150.20:FF:000001">
    <property type="entry name" value="ATP synthase subunit alpha"/>
    <property type="match status" value="1"/>
</dbReference>
<dbReference type="FunFam" id="2.40.30.20:FF:000001">
    <property type="entry name" value="ATP synthase subunit alpha"/>
    <property type="match status" value="1"/>
</dbReference>
<dbReference type="FunFam" id="3.40.50.300:FF:000002">
    <property type="entry name" value="ATP synthase subunit alpha"/>
    <property type="match status" value="1"/>
</dbReference>
<dbReference type="Gene3D" id="2.40.30.20">
    <property type="match status" value="1"/>
</dbReference>
<dbReference type="Gene3D" id="1.20.150.20">
    <property type="entry name" value="ATP synthase alpha/beta chain, C-terminal domain"/>
    <property type="match status" value="1"/>
</dbReference>
<dbReference type="Gene3D" id="3.40.50.300">
    <property type="entry name" value="P-loop containing nucleotide triphosphate hydrolases"/>
    <property type="match status" value="1"/>
</dbReference>
<dbReference type="HAMAP" id="MF_01346">
    <property type="entry name" value="ATP_synth_alpha_bact"/>
    <property type="match status" value="1"/>
</dbReference>
<dbReference type="InterPro" id="IPR023366">
    <property type="entry name" value="ATP_synth_asu-like_sf"/>
</dbReference>
<dbReference type="InterPro" id="IPR000793">
    <property type="entry name" value="ATP_synth_asu_C"/>
</dbReference>
<dbReference type="InterPro" id="IPR038376">
    <property type="entry name" value="ATP_synth_asu_C_sf"/>
</dbReference>
<dbReference type="InterPro" id="IPR033732">
    <property type="entry name" value="ATP_synth_F1_a_nt-bd_dom"/>
</dbReference>
<dbReference type="InterPro" id="IPR005294">
    <property type="entry name" value="ATP_synth_F1_asu"/>
</dbReference>
<dbReference type="InterPro" id="IPR020003">
    <property type="entry name" value="ATPase_a/bsu_AS"/>
</dbReference>
<dbReference type="InterPro" id="IPR004100">
    <property type="entry name" value="ATPase_F1/V1/A1_a/bsu_N"/>
</dbReference>
<dbReference type="InterPro" id="IPR036121">
    <property type="entry name" value="ATPase_F1/V1/A1_a/bsu_N_sf"/>
</dbReference>
<dbReference type="InterPro" id="IPR000194">
    <property type="entry name" value="ATPase_F1/V1/A1_a/bsu_nucl-bd"/>
</dbReference>
<dbReference type="InterPro" id="IPR027417">
    <property type="entry name" value="P-loop_NTPase"/>
</dbReference>
<dbReference type="NCBIfam" id="TIGR00962">
    <property type="entry name" value="atpA"/>
    <property type="match status" value="1"/>
</dbReference>
<dbReference type="NCBIfam" id="NF009884">
    <property type="entry name" value="PRK13343.1"/>
    <property type="match status" value="1"/>
</dbReference>
<dbReference type="PANTHER" id="PTHR48082">
    <property type="entry name" value="ATP SYNTHASE SUBUNIT ALPHA, MITOCHONDRIAL"/>
    <property type="match status" value="1"/>
</dbReference>
<dbReference type="PANTHER" id="PTHR48082:SF2">
    <property type="entry name" value="ATP SYNTHASE SUBUNIT ALPHA, MITOCHONDRIAL"/>
    <property type="match status" value="1"/>
</dbReference>
<dbReference type="Pfam" id="PF00006">
    <property type="entry name" value="ATP-synt_ab"/>
    <property type="match status" value="1"/>
</dbReference>
<dbReference type="Pfam" id="PF00306">
    <property type="entry name" value="ATP-synt_ab_C"/>
    <property type="match status" value="1"/>
</dbReference>
<dbReference type="Pfam" id="PF02874">
    <property type="entry name" value="ATP-synt_ab_N"/>
    <property type="match status" value="1"/>
</dbReference>
<dbReference type="SUPFAM" id="SSF47917">
    <property type="entry name" value="C-terminal domain of alpha and beta subunits of F1 ATP synthase"/>
    <property type="match status" value="1"/>
</dbReference>
<dbReference type="SUPFAM" id="SSF50615">
    <property type="entry name" value="N-terminal domain of alpha and beta subunits of F1 ATP synthase"/>
    <property type="match status" value="1"/>
</dbReference>
<dbReference type="SUPFAM" id="SSF52540">
    <property type="entry name" value="P-loop containing nucleoside triphosphate hydrolases"/>
    <property type="match status" value="1"/>
</dbReference>
<dbReference type="PROSITE" id="PS00152">
    <property type="entry name" value="ATPASE_ALPHA_BETA"/>
    <property type="match status" value="1"/>
</dbReference>
<sequence>MQLNSTEISELIKQRIAQFNVVSEAHNEGTIVSVSDGVIRIHGLADCMQGEMISLPGNRYAIALNLERDSVGAVVMGPYADLAEGMKVKCTGRILEVPVGRGLLGRVVNTLGAPIDGKGPVDNDGFSAVEAIAPGVIDRQSVDQPVQTGYKAVDSMIPIGRGQRELIIGDRQTGKTALAIDAIINQRDSGIKCIYVAIGQKASTISNVVRKLEEHGALANTIVVVATASESAALQYLAPYAGCAMGEYFRDRGEDALIIYDDLSKQAVAYRQISLLLRRPPGREAFPGDVFYLHSRLLERAARVNADYVEAFTKGEVKGKTGSLTALPIIETQAGDVSAFVPTNVISITDGQIFLESNLFNAGIRPAVNPGISVSRVGGAAQTKIMKKLSGGIRTALAQYRELAAFSQFASDLDDATRKQLDHGQKVTELLKQKQYAPMSVAQQSLVLFAAERGYLADVELAKIGSFEAALLAYVDRDHAPLMQEINQSGGYNDEIEGKLKGILDSFKATQSW</sequence>
<reference key="1">
    <citation type="journal article" date="2011" name="J. Bacteriol.">
        <title>Comparative genomics of 28 Salmonella enterica isolates: evidence for CRISPR-mediated adaptive sublineage evolution.</title>
        <authorList>
            <person name="Fricke W.F."/>
            <person name="Mammel M.K."/>
            <person name="McDermott P.F."/>
            <person name="Tartera C."/>
            <person name="White D.G."/>
            <person name="Leclerc J.E."/>
            <person name="Ravel J."/>
            <person name="Cebula T.A."/>
        </authorList>
    </citation>
    <scope>NUCLEOTIDE SEQUENCE [LARGE SCALE GENOMIC DNA]</scope>
    <source>
        <strain>SL483</strain>
    </source>
</reference>
<keyword id="KW-0066">ATP synthesis</keyword>
<keyword id="KW-0067">ATP-binding</keyword>
<keyword id="KW-0997">Cell inner membrane</keyword>
<keyword id="KW-1003">Cell membrane</keyword>
<keyword id="KW-0139">CF(1)</keyword>
<keyword id="KW-0375">Hydrogen ion transport</keyword>
<keyword id="KW-0406">Ion transport</keyword>
<keyword id="KW-0472">Membrane</keyword>
<keyword id="KW-0547">Nucleotide-binding</keyword>
<keyword id="KW-1278">Translocase</keyword>
<keyword id="KW-0813">Transport</keyword>
<feature type="chain" id="PRO_1000143428" description="ATP synthase subunit alpha">
    <location>
        <begin position="1"/>
        <end position="513"/>
    </location>
</feature>
<feature type="binding site" evidence="1">
    <location>
        <begin position="169"/>
        <end position="176"/>
    </location>
    <ligand>
        <name>ATP</name>
        <dbReference type="ChEBI" id="CHEBI:30616"/>
    </ligand>
</feature>
<feature type="site" description="Required for activity" evidence="1">
    <location>
        <position position="373"/>
    </location>
</feature>
<protein>
    <recommendedName>
        <fullName evidence="1">ATP synthase subunit alpha</fullName>
        <ecNumber evidence="1">7.1.2.2</ecNumber>
    </recommendedName>
    <alternativeName>
        <fullName evidence="1">ATP synthase F1 sector subunit alpha</fullName>
    </alternativeName>
    <alternativeName>
        <fullName evidence="1">F-ATPase subunit alpha</fullName>
    </alternativeName>
</protein>
<proteinExistence type="inferred from homology"/>
<organism>
    <name type="scientific">Salmonella agona (strain SL483)</name>
    <dbReference type="NCBI Taxonomy" id="454166"/>
    <lineage>
        <taxon>Bacteria</taxon>
        <taxon>Pseudomonadati</taxon>
        <taxon>Pseudomonadota</taxon>
        <taxon>Gammaproteobacteria</taxon>
        <taxon>Enterobacterales</taxon>
        <taxon>Enterobacteriaceae</taxon>
        <taxon>Salmonella</taxon>
    </lineage>
</organism>
<gene>
    <name evidence="1" type="primary">atpA</name>
    <name type="ordered locus">SeAg_B4092</name>
</gene>